<keyword id="KW-0961">Cell wall biogenesis/degradation</keyword>
<keyword id="KW-1015">Disulfide bond</keyword>
<keyword id="KW-0325">Glycoprotein</keyword>
<keyword id="KW-0326">Glycosidase</keyword>
<keyword id="KW-0378">Hydrolase</keyword>
<keyword id="KW-1185">Reference proteome</keyword>
<keyword id="KW-0677">Repeat</keyword>
<keyword id="KW-0964">Secreted</keyword>
<keyword id="KW-0732">Signal</keyword>
<comment type="function">
    <text evidence="1">Specific in hydrolyzing the terminal glycosidic bond of polygalacturonic acid and oligogalacturonates.</text>
</comment>
<comment type="catalytic activity">
    <reaction>
        <text>[(1-&gt;4)-alpha-D-galacturonosyl](n) + H2O = alpha-D-galacturonate + [(1-&gt;4)-alpha-D-galacturonosyl](n-1)</text>
        <dbReference type="Rhea" id="RHEA:14117"/>
        <dbReference type="Rhea" id="RHEA-COMP:14570"/>
        <dbReference type="Rhea" id="RHEA-COMP:14572"/>
        <dbReference type="ChEBI" id="CHEBI:15377"/>
        <dbReference type="ChEBI" id="CHEBI:58658"/>
        <dbReference type="ChEBI" id="CHEBI:140523"/>
        <dbReference type="EC" id="3.2.1.67"/>
    </reaction>
</comment>
<comment type="subcellular location">
    <subcellularLocation>
        <location evidence="1">Secreted</location>
    </subcellularLocation>
</comment>
<comment type="similarity">
    <text evidence="4">Belongs to the glycosyl hydrolase 28 family.</text>
</comment>
<dbReference type="EC" id="3.2.1.67"/>
<dbReference type="EMBL" id="AM270232">
    <property type="protein sequence ID" value="CAK48389.1"/>
    <property type="molecule type" value="Genomic_DNA"/>
</dbReference>
<dbReference type="RefSeq" id="XP_001394399.1">
    <property type="nucleotide sequence ID" value="XM_001394362.1"/>
</dbReference>
<dbReference type="SMR" id="A2QW66"/>
<dbReference type="CAZy" id="GH28">
    <property type="family name" value="Glycoside Hydrolase Family 28"/>
</dbReference>
<dbReference type="GlyCosmos" id="A2QW66">
    <property type="glycosylation" value="10 sites, No reported glycans"/>
</dbReference>
<dbReference type="EnsemblFungi" id="CAK48389">
    <property type="protein sequence ID" value="CAK48389"/>
    <property type="gene ID" value="An11g04040"/>
</dbReference>
<dbReference type="GeneID" id="4984635"/>
<dbReference type="KEGG" id="ang:An11g04040"/>
<dbReference type="VEuPathDB" id="FungiDB:An11g04040"/>
<dbReference type="HOGENOM" id="CLU_016031_1_0_1"/>
<dbReference type="Proteomes" id="UP000006706">
    <property type="component" value="Chromosome 7R"/>
</dbReference>
<dbReference type="GO" id="GO:0005576">
    <property type="term" value="C:extracellular region"/>
    <property type="evidence" value="ECO:0000250"/>
    <property type="project" value="UniProtKB"/>
</dbReference>
<dbReference type="GO" id="GO:0047911">
    <property type="term" value="F:galacturan 1,4-alpha-galacturonidase activity"/>
    <property type="evidence" value="ECO:0007669"/>
    <property type="project" value="UniProtKB-EC"/>
</dbReference>
<dbReference type="GO" id="GO:0016798">
    <property type="term" value="F:hydrolase activity, acting on glycosyl bonds"/>
    <property type="evidence" value="ECO:0000314"/>
    <property type="project" value="AspGD"/>
</dbReference>
<dbReference type="GO" id="GO:0004650">
    <property type="term" value="F:polygalacturonase activity"/>
    <property type="evidence" value="ECO:0000314"/>
    <property type="project" value="AspGD"/>
</dbReference>
<dbReference type="GO" id="GO:0016052">
    <property type="term" value="P:carbohydrate catabolic process"/>
    <property type="evidence" value="ECO:0000314"/>
    <property type="project" value="AspGD"/>
</dbReference>
<dbReference type="GO" id="GO:0071555">
    <property type="term" value="P:cell wall organization"/>
    <property type="evidence" value="ECO:0007669"/>
    <property type="project" value="UniProtKB-KW"/>
</dbReference>
<dbReference type="GO" id="GO:0045490">
    <property type="term" value="P:pectin catabolic process"/>
    <property type="evidence" value="ECO:0000250"/>
    <property type="project" value="UniProtKB"/>
</dbReference>
<dbReference type="FunFam" id="2.160.20.10:FF:000027">
    <property type="entry name" value="Probable exopolygalacturonase X"/>
    <property type="match status" value="1"/>
</dbReference>
<dbReference type="Gene3D" id="2.160.20.10">
    <property type="entry name" value="Single-stranded right-handed beta-helix, Pectin lyase-like"/>
    <property type="match status" value="1"/>
</dbReference>
<dbReference type="InterPro" id="IPR000743">
    <property type="entry name" value="Glyco_hydro_28"/>
</dbReference>
<dbReference type="InterPro" id="IPR012334">
    <property type="entry name" value="Pectin_lyas_fold"/>
</dbReference>
<dbReference type="InterPro" id="IPR011050">
    <property type="entry name" value="Pectin_lyase_fold/virulence"/>
</dbReference>
<dbReference type="PANTHER" id="PTHR31736">
    <property type="match status" value="1"/>
</dbReference>
<dbReference type="PANTHER" id="PTHR31736:SF14">
    <property type="entry name" value="EXOPOLYGALACTURONASE X-1-RELATED"/>
    <property type="match status" value="1"/>
</dbReference>
<dbReference type="Pfam" id="PF00295">
    <property type="entry name" value="Glyco_hydro_28"/>
    <property type="match status" value="1"/>
</dbReference>
<dbReference type="SUPFAM" id="SSF51126">
    <property type="entry name" value="Pectin lyase-like"/>
    <property type="match status" value="1"/>
</dbReference>
<dbReference type="PROSITE" id="PS00502">
    <property type="entry name" value="POLYGALACTURONASE"/>
    <property type="match status" value="1"/>
</dbReference>
<proteinExistence type="inferred from homology"/>
<feature type="signal peptide" evidence="2">
    <location>
        <begin position="1"/>
        <end position="19"/>
    </location>
</feature>
<feature type="chain" id="PRO_5000220581" description="Probable exopolygalacturonase A">
    <location>
        <begin position="20"/>
        <end position="434"/>
    </location>
</feature>
<feature type="repeat" description="PbH1 1">
    <location>
        <begin position="232"/>
        <end position="253"/>
    </location>
</feature>
<feature type="repeat" description="PbH1 2">
    <location>
        <begin position="255"/>
        <end position="275"/>
    </location>
</feature>
<feature type="active site" description="Proton donor" evidence="3">
    <location>
        <position position="246"/>
    </location>
</feature>
<feature type="active site" evidence="3">
    <location>
        <position position="269"/>
    </location>
</feature>
<feature type="glycosylation site" description="N-linked (GlcNAc...) asparagine" evidence="2">
    <location>
        <position position="46"/>
    </location>
</feature>
<feature type="glycosylation site" description="N-linked (GlcNAc...) asparagine" evidence="2">
    <location>
        <position position="57"/>
    </location>
</feature>
<feature type="glycosylation site" description="N-linked (GlcNAc...) asparagine" evidence="2">
    <location>
        <position position="106"/>
    </location>
</feature>
<feature type="glycosylation site" description="N-linked (GlcNAc...) asparagine" evidence="2">
    <location>
        <position position="199"/>
    </location>
</feature>
<feature type="glycosylation site" description="N-linked (GlcNAc...) asparagine" evidence="2">
    <location>
        <position position="207"/>
    </location>
</feature>
<feature type="glycosylation site" description="N-linked (GlcNAc...) asparagine" evidence="2">
    <location>
        <position position="254"/>
    </location>
</feature>
<feature type="glycosylation site" description="N-linked (GlcNAc...) asparagine" evidence="2">
    <location>
        <position position="293"/>
    </location>
</feature>
<feature type="glycosylation site" description="N-linked (GlcNAc...) asparagine" evidence="2">
    <location>
        <position position="329"/>
    </location>
</feature>
<feature type="glycosylation site" description="N-linked (GlcNAc...) asparagine" evidence="2">
    <location>
        <position position="354"/>
    </location>
</feature>
<feature type="glycosylation site" description="N-linked (GlcNAc...) asparagine" evidence="2">
    <location>
        <position position="400"/>
    </location>
</feature>
<feature type="disulfide bond" evidence="1">
    <location>
        <begin position="248"/>
        <end position="265"/>
    </location>
</feature>
<feature type="disulfide bond" evidence="1">
    <location>
        <begin position="392"/>
        <end position="398"/>
    </location>
</feature>
<name>PGXA_ASPNC</name>
<gene>
    <name type="primary">pgxA</name>
    <name type="ORF">An11g04040</name>
</gene>
<protein>
    <recommendedName>
        <fullName>Probable exopolygalacturonase A</fullName>
        <ecNumber>3.2.1.67</ecNumber>
    </recommendedName>
    <alternativeName>
        <fullName>Galacturan 1,4-alpha-galacturonidase A</fullName>
    </alternativeName>
    <alternativeName>
        <fullName>Poly(1,4-alpha-D-galacturonide)galacturonohydrolase A</fullName>
    </alternativeName>
</protein>
<accession>A2QW66</accession>
<sequence length="434" mass="46966">MKLPILVTLFITLPALCVSSKTPSAPTISAYPKSPGNFKPASGRQNSTSNVCEVKPNQTDAAPGILAAAHTCNNGGTVFLPPGDFVVATALDLTFLNNIDFAIWGNITFKKDIDLWTTQAFQYTFQTASLFWRFGGNNVNIYGDGKGVIDGAGQYWWSAMAEDSSVMRPCLLGTDGLHHATISGLTMLNSPNWFNLIANSTDILISNMTMLVESEISDAPAKNTDGWDIYRSSNIVIQDSRIVNTDDCVSFKPNSTQIVIQNLDCTGSHGISVGSLGQYQGETDIVEDLYIYNISMTDASDVARIKVWPGVPADTSGSTSGGGLGRVRNVTYEHMQSENNDHIISVSQCYESKNQTMCDSYPSKLVIEDVLFKDFKGTTSKKYDPEIGELTCSSPDVCHNITVQDINVTPPSGDSPTFTCNNMGNSNLEDITCA</sequence>
<evidence type="ECO:0000250" key="1"/>
<evidence type="ECO:0000255" key="2"/>
<evidence type="ECO:0000255" key="3">
    <source>
        <dbReference type="PROSITE-ProRule" id="PRU10052"/>
    </source>
</evidence>
<evidence type="ECO:0000305" key="4"/>
<organism>
    <name type="scientific">Aspergillus niger (strain ATCC MYA-4892 / CBS 513.88 / FGSC A1513)</name>
    <dbReference type="NCBI Taxonomy" id="425011"/>
    <lineage>
        <taxon>Eukaryota</taxon>
        <taxon>Fungi</taxon>
        <taxon>Dikarya</taxon>
        <taxon>Ascomycota</taxon>
        <taxon>Pezizomycotina</taxon>
        <taxon>Eurotiomycetes</taxon>
        <taxon>Eurotiomycetidae</taxon>
        <taxon>Eurotiales</taxon>
        <taxon>Aspergillaceae</taxon>
        <taxon>Aspergillus</taxon>
        <taxon>Aspergillus subgen. Circumdati</taxon>
    </lineage>
</organism>
<reference key="1">
    <citation type="journal article" date="2007" name="Nat. Biotechnol.">
        <title>Genome sequencing and analysis of the versatile cell factory Aspergillus niger CBS 513.88.</title>
        <authorList>
            <person name="Pel H.J."/>
            <person name="de Winde J.H."/>
            <person name="Archer D.B."/>
            <person name="Dyer P.S."/>
            <person name="Hofmann G."/>
            <person name="Schaap P.J."/>
            <person name="Turner G."/>
            <person name="de Vries R.P."/>
            <person name="Albang R."/>
            <person name="Albermann K."/>
            <person name="Andersen M.R."/>
            <person name="Bendtsen J.D."/>
            <person name="Benen J.A.E."/>
            <person name="van den Berg M."/>
            <person name="Breestraat S."/>
            <person name="Caddick M.X."/>
            <person name="Contreras R."/>
            <person name="Cornell M."/>
            <person name="Coutinho P.M."/>
            <person name="Danchin E.G.J."/>
            <person name="Debets A.J.M."/>
            <person name="Dekker P."/>
            <person name="van Dijck P.W.M."/>
            <person name="van Dijk A."/>
            <person name="Dijkhuizen L."/>
            <person name="Driessen A.J.M."/>
            <person name="d'Enfert C."/>
            <person name="Geysens S."/>
            <person name="Goosen C."/>
            <person name="Groot G.S.P."/>
            <person name="de Groot P.W.J."/>
            <person name="Guillemette T."/>
            <person name="Henrissat B."/>
            <person name="Herweijer M."/>
            <person name="van den Hombergh J.P.T.W."/>
            <person name="van den Hondel C.A.M.J.J."/>
            <person name="van der Heijden R.T.J.M."/>
            <person name="van der Kaaij R.M."/>
            <person name="Klis F.M."/>
            <person name="Kools H.J."/>
            <person name="Kubicek C.P."/>
            <person name="van Kuyk P.A."/>
            <person name="Lauber J."/>
            <person name="Lu X."/>
            <person name="van der Maarel M.J.E.C."/>
            <person name="Meulenberg R."/>
            <person name="Menke H."/>
            <person name="Mortimer M.A."/>
            <person name="Nielsen J."/>
            <person name="Oliver S.G."/>
            <person name="Olsthoorn M."/>
            <person name="Pal K."/>
            <person name="van Peij N.N.M.E."/>
            <person name="Ram A.F.J."/>
            <person name="Rinas U."/>
            <person name="Roubos J.A."/>
            <person name="Sagt C.M.J."/>
            <person name="Schmoll M."/>
            <person name="Sun J."/>
            <person name="Ussery D."/>
            <person name="Varga J."/>
            <person name="Vervecken W."/>
            <person name="van de Vondervoort P.J.J."/>
            <person name="Wedler H."/>
            <person name="Woesten H.A.B."/>
            <person name="Zeng A.-P."/>
            <person name="van Ooyen A.J.J."/>
            <person name="Visser J."/>
            <person name="Stam H."/>
        </authorList>
    </citation>
    <scope>NUCLEOTIDE SEQUENCE [LARGE SCALE GENOMIC DNA]</scope>
    <source>
        <strain>ATCC MYA-4892 / CBS 513.88 / FGSC A1513</strain>
    </source>
</reference>